<proteinExistence type="evidence at protein level"/>
<evidence type="ECO:0000250" key="1">
    <source>
        <dbReference type="UniProtKB" id="P17695"/>
    </source>
</evidence>
<evidence type="ECO:0000255" key="2">
    <source>
        <dbReference type="PROSITE-ProRule" id="PRU00686"/>
    </source>
</evidence>
<evidence type="ECO:0000269" key="3">
    <source>
    </source>
</evidence>
<evidence type="ECO:0000303" key="4">
    <source>
    </source>
</evidence>
<evidence type="ECO:0000305" key="5"/>
<evidence type="ECO:0000305" key="6">
    <source>
    </source>
</evidence>
<organism>
    <name type="scientific">Bacillus subtilis (strain 168)</name>
    <dbReference type="NCBI Taxonomy" id="224308"/>
    <lineage>
        <taxon>Bacteria</taxon>
        <taxon>Bacillati</taxon>
        <taxon>Bacillota</taxon>
        <taxon>Bacilli</taxon>
        <taxon>Bacillales</taxon>
        <taxon>Bacillaceae</taxon>
        <taxon>Bacillus</taxon>
    </lineage>
</organism>
<feature type="chain" id="PRO_0000387954" description="N-acetyl-S-hydroxy-L-cysteine reductase">
    <location>
        <begin position="1"/>
        <end position="93"/>
    </location>
</feature>
<feature type="domain" description="Glutaredoxin" evidence="2">
    <location>
        <begin position="1"/>
        <end position="93"/>
    </location>
</feature>
<feature type="disulfide bond" description="Redox-active" evidence="1">
    <location>
        <begin position="15"/>
        <end position="18"/>
    </location>
</feature>
<keyword id="KW-1015">Disulfide bond</keyword>
<keyword id="KW-0249">Electron transport</keyword>
<keyword id="KW-0560">Oxidoreductase</keyword>
<keyword id="KW-0676">Redox-active center</keyword>
<keyword id="KW-1185">Reference proteome</keyword>
<keyword id="KW-0813">Transport</keyword>
<comment type="function">
    <text evidence="3">Involved in a cysteine salvage pathway from S-alkylcysteine. Catalyzes the reduction of N-acetyl-S-hydroxy-L-cysteine (N-acetyl-L-cysteine sulfenic acid) to N-acetyl-L-cysteine. This pathway is likely important in the catabolism of alkylated cysteine generated by proteolysis of alkylated glutathione formed in the detoxification of a wide range of electrophiles.</text>
</comment>
<comment type="catalytic activity">
    <reaction evidence="3">
        <text>N-acetyl-S-hydroxy-L-cysteine + AH2 = N-acetyl-L-cysteine + A + H2O</text>
        <dbReference type="Rhea" id="RHEA:75531"/>
        <dbReference type="ChEBI" id="CHEBI:13193"/>
        <dbReference type="ChEBI" id="CHEBI:15377"/>
        <dbReference type="ChEBI" id="CHEBI:17499"/>
        <dbReference type="ChEBI" id="CHEBI:78236"/>
        <dbReference type="ChEBI" id="CHEBI:194344"/>
    </reaction>
    <physiologicalReaction direction="left-to-right" evidence="6">
        <dbReference type="Rhea" id="RHEA:75532"/>
    </physiologicalReaction>
</comment>
<comment type="pathway">
    <text evidence="6">Amino-acid metabolism.</text>
</comment>
<comment type="similarity">
    <text evidence="5">Belongs to the glutaredoxin family.</text>
</comment>
<name>CMOI_BACSU</name>
<dbReference type="EC" id="1.8.4.-" evidence="3"/>
<dbReference type="EMBL" id="AF008220">
    <property type="protein sequence ID" value="AAC00331.1"/>
    <property type="molecule type" value="Genomic_DNA"/>
</dbReference>
<dbReference type="EMBL" id="AL009126">
    <property type="protein sequence ID" value="CAB14892.1"/>
    <property type="molecule type" value="Genomic_DNA"/>
</dbReference>
<dbReference type="PIR" id="D69997">
    <property type="entry name" value="D69997"/>
</dbReference>
<dbReference type="RefSeq" id="NP_390810.1">
    <property type="nucleotide sequence ID" value="NC_000964.3"/>
</dbReference>
<dbReference type="RefSeq" id="WP_004399148.1">
    <property type="nucleotide sequence ID" value="NZ_OZ025638.1"/>
</dbReference>
<dbReference type="SMR" id="O34639"/>
<dbReference type="FunCoup" id="O34639">
    <property type="interactions" value="19"/>
</dbReference>
<dbReference type="STRING" id="224308.BSU29320"/>
<dbReference type="PaxDb" id="224308-BSU29320"/>
<dbReference type="EnsemblBacteria" id="CAB14892">
    <property type="protein sequence ID" value="CAB14892"/>
    <property type="gene ID" value="BSU_29320"/>
</dbReference>
<dbReference type="GeneID" id="936632"/>
<dbReference type="KEGG" id="bsu:BSU29320"/>
<dbReference type="PATRIC" id="fig|224308.179.peg.3186"/>
<dbReference type="eggNOG" id="COG0695">
    <property type="taxonomic scope" value="Bacteria"/>
</dbReference>
<dbReference type="InParanoid" id="O34639"/>
<dbReference type="OrthoDB" id="2192230at2"/>
<dbReference type="BioCyc" id="BSUB:BSU29320-MONOMER"/>
<dbReference type="BioCyc" id="MetaCyc:BSU29320-MONOMER"/>
<dbReference type="Proteomes" id="UP000001570">
    <property type="component" value="Chromosome"/>
</dbReference>
<dbReference type="GO" id="GO:0009055">
    <property type="term" value="F:electron transfer activity"/>
    <property type="evidence" value="ECO:0000318"/>
    <property type="project" value="GO_Central"/>
</dbReference>
<dbReference type="GO" id="GO:0016491">
    <property type="term" value="F:oxidoreductase activity"/>
    <property type="evidence" value="ECO:0007669"/>
    <property type="project" value="UniProtKB-KW"/>
</dbReference>
<dbReference type="GO" id="GO:0045454">
    <property type="term" value="P:cell redox homeostasis"/>
    <property type="evidence" value="ECO:0000318"/>
    <property type="project" value="GO_Central"/>
</dbReference>
<dbReference type="CDD" id="cd02976">
    <property type="entry name" value="NrdH"/>
    <property type="match status" value="1"/>
</dbReference>
<dbReference type="Gene3D" id="3.40.30.10">
    <property type="entry name" value="Glutaredoxin"/>
    <property type="match status" value="1"/>
</dbReference>
<dbReference type="InterPro" id="IPR002109">
    <property type="entry name" value="Glutaredoxin"/>
</dbReference>
<dbReference type="InterPro" id="IPR051548">
    <property type="entry name" value="Grx-like_ET"/>
</dbReference>
<dbReference type="InterPro" id="IPR036249">
    <property type="entry name" value="Thioredoxin-like_sf"/>
</dbReference>
<dbReference type="PANTHER" id="PTHR34386">
    <property type="entry name" value="GLUTAREDOXIN"/>
    <property type="match status" value="1"/>
</dbReference>
<dbReference type="PANTHER" id="PTHR34386:SF1">
    <property type="entry name" value="GLUTAREDOXIN-LIKE PROTEIN NRDH"/>
    <property type="match status" value="1"/>
</dbReference>
<dbReference type="Pfam" id="PF00462">
    <property type="entry name" value="Glutaredoxin"/>
    <property type="match status" value="1"/>
</dbReference>
<dbReference type="SUPFAM" id="SSF52833">
    <property type="entry name" value="Thioredoxin-like"/>
    <property type="match status" value="1"/>
</dbReference>
<dbReference type="PROSITE" id="PS51354">
    <property type="entry name" value="GLUTAREDOXIN_2"/>
    <property type="match status" value="1"/>
</dbReference>
<accession>O34639</accession>
<accession>Q795U7</accession>
<protein>
    <recommendedName>
        <fullName evidence="6">N-acetyl-S-hydroxy-L-cysteine reductase</fullName>
        <ecNumber evidence="3">1.8.4.-</ecNumber>
    </recommendedName>
    <alternativeName>
        <fullName evidence="4">N-acetyl-L-cysteine sulfenic acid reductase</fullName>
    </alternativeName>
</protein>
<gene>
    <name evidence="4" type="primary">cmoI</name>
    <name type="synonym">ytnI</name>
    <name type="ordered locus">BSU29320</name>
</gene>
<sequence>MSDVVNIVVWSKKGCSYCEEVKNYLNEKGFPFQNIDVSEKEKLRDILQVKYGVRHVPVVEIGRGNQYQGITEIGIEHLDLALANHAQIKEAKR</sequence>
<reference key="1">
    <citation type="journal article" date="1997" name="Microbiology">
        <title>Sequencing and functional annotation of the Bacillus subtilis genes in the 200 kb rrnB-dnaB region.</title>
        <authorList>
            <person name="Lapidus A."/>
            <person name="Galleron N."/>
            <person name="Sorokin A."/>
            <person name="Ehrlich S.D."/>
        </authorList>
    </citation>
    <scope>NUCLEOTIDE SEQUENCE [GENOMIC DNA]</scope>
    <source>
        <strain>168</strain>
    </source>
</reference>
<reference key="2">
    <citation type="journal article" date="1997" name="Nature">
        <title>The complete genome sequence of the Gram-positive bacterium Bacillus subtilis.</title>
        <authorList>
            <person name="Kunst F."/>
            <person name="Ogasawara N."/>
            <person name="Moszer I."/>
            <person name="Albertini A.M."/>
            <person name="Alloni G."/>
            <person name="Azevedo V."/>
            <person name="Bertero M.G."/>
            <person name="Bessieres P."/>
            <person name="Bolotin A."/>
            <person name="Borchert S."/>
            <person name="Borriss R."/>
            <person name="Boursier L."/>
            <person name="Brans A."/>
            <person name="Braun M."/>
            <person name="Brignell S.C."/>
            <person name="Bron S."/>
            <person name="Brouillet S."/>
            <person name="Bruschi C.V."/>
            <person name="Caldwell B."/>
            <person name="Capuano V."/>
            <person name="Carter N.M."/>
            <person name="Choi S.-K."/>
            <person name="Codani J.-J."/>
            <person name="Connerton I.F."/>
            <person name="Cummings N.J."/>
            <person name="Daniel R.A."/>
            <person name="Denizot F."/>
            <person name="Devine K.M."/>
            <person name="Duesterhoeft A."/>
            <person name="Ehrlich S.D."/>
            <person name="Emmerson P.T."/>
            <person name="Entian K.-D."/>
            <person name="Errington J."/>
            <person name="Fabret C."/>
            <person name="Ferrari E."/>
            <person name="Foulger D."/>
            <person name="Fritz C."/>
            <person name="Fujita M."/>
            <person name="Fujita Y."/>
            <person name="Fuma S."/>
            <person name="Galizzi A."/>
            <person name="Galleron N."/>
            <person name="Ghim S.-Y."/>
            <person name="Glaser P."/>
            <person name="Goffeau A."/>
            <person name="Golightly E.J."/>
            <person name="Grandi G."/>
            <person name="Guiseppi G."/>
            <person name="Guy B.J."/>
            <person name="Haga K."/>
            <person name="Haiech J."/>
            <person name="Harwood C.R."/>
            <person name="Henaut A."/>
            <person name="Hilbert H."/>
            <person name="Holsappel S."/>
            <person name="Hosono S."/>
            <person name="Hullo M.-F."/>
            <person name="Itaya M."/>
            <person name="Jones L.-M."/>
            <person name="Joris B."/>
            <person name="Karamata D."/>
            <person name="Kasahara Y."/>
            <person name="Klaerr-Blanchard M."/>
            <person name="Klein C."/>
            <person name="Kobayashi Y."/>
            <person name="Koetter P."/>
            <person name="Koningstein G."/>
            <person name="Krogh S."/>
            <person name="Kumano M."/>
            <person name="Kurita K."/>
            <person name="Lapidus A."/>
            <person name="Lardinois S."/>
            <person name="Lauber J."/>
            <person name="Lazarevic V."/>
            <person name="Lee S.-M."/>
            <person name="Levine A."/>
            <person name="Liu H."/>
            <person name="Masuda S."/>
            <person name="Mauel C."/>
            <person name="Medigue C."/>
            <person name="Medina N."/>
            <person name="Mellado R.P."/>
            <person name="Mizuno M."/>
            <person name="Moestl D."/>
            <person name="Nakai S."/>
            <person name="Noback M."/>
            <person name="Noone D."/>
            <person name="O'Reilly M."/>
            <person name="Ogawa K."/>
            <person name="Ogiwara A."/>
            <person name="Oudega B."/>
            <person name="Park S.-H."/>
            <person name="Parro V."/>
            <person name="Pohl T.M."/>
            <person name="Portetelle D."/>
            <person name="Porwollik S."/>
            <person name="Prescott A.M."/>
            <person name="Presecan E."/>
            <person name="Pujic P."/>
            <person name="Purnelle B."/>
            <person name="Rapoport G."/>
            <person name="Rey M."/>
            <person name="Reynolds S."/>
            <person name="Rieger M."/>
            <person name="Rivolta C."/>
            <person name="Rocha E."/>
            <person name="Roche B."/>
            <person name="Rose M."/>
            <person name="Sadaie Y."/>
            <person name="Sato T."/>
            <person name="Scanlan E."/>
            <person name="Schleich S."/>
            <person name="Schroeter R."/>
            <person name="Scoffone F."/>
            <person name="Sekiguchi J."/>
            <person name="Sekowska A."/>
            <person name="Seror S.J."/>
            <person name="Serror P."/>
            <person name="Shin B.-S."/>
            <person name="Soldo B."/>
            <person name="Sorokin A."/>
            <person name="Tacconi E."/>
            <person name="Takagi T."/>
            <person name="Takahashi H."/>
            <person name="Takemaru K."/>
            <person name="Takeuchi M."/>
            <person name="Tamakoshi A."/>
            <person name="Tanaka T."/>
            <person name="Terpstra P."/>
            <person name="Tognoni A."/>
            <person name="Tosato V."/>
            <person name="Uchiyama S."/>
            <person name="Vandenbol M."/>
            <person name="Vannier F."/>
            <person name="Vassarotti A."/>
            <person name="Viari A."/>
            <person name="Wambutt R."/>
            <person name="Wedler E."/>
            <person name="Wedler H."/>
            <person name="Weitzenegger T."/>
            <person name="Winters P."/>
            <person name="Wipat A."/>
            <person name="Yamamoto H."/>
            <person name="Yamane K."/>
            <person name="Yasumoto K."/>
            <person name="Yata K."/>
            <person name="Yoshida K."/>
            <person name="Yoshikawa H.-F."/>
            <person name="Zumstein E."/>
            <person name="Yoshikawa H."/>
            <person name="Danchin A."/>
        </authorList>
    </citation>
    <scope>NUCLEOTIDE SEQUENCE [LARGE SCALE GENOMIC DNA]</scope>
    <source>
        <strain>168</strain>
    </source>
</reference>
<reference key="3">
    <citation type="journal article" date="2022" name="Biochemistry">
        <title>Cysteine Dealkylation in Bacillus subtilis by a Novel Flavin-Dependent Monooxygenase.</title>
        <authorList>
            <person name="Hazra S."/>
            <person name="Bhandari D.M."/>
            <person name="Krishnamoorthy K."/>
            <person name="Sekowska A."/>
            <person name="Danchin A."/>
            <person name="Begley T.P."/>
        </authorList>
    </citation>
    <scope>FUNCTION</scope>
    <scope>CATALYTIC ACTIVITY</scope>
    <scope>PATHWAY</scope>
</reference>